<proteinExistence type="inferred from homology"/>
<reference key="1">
    <citation type="submission" date="2008-05" db="EMBL/GenBank/DDBJ databases">
        <title>Complete sequence of Chlorobium limicola DSM 245.</title>
        <authorList>
            <consortium name="US DOE Joint Genome Institute"/>
            <person name="Lucas S."/>
            <person name="Copeland A."/>
            <person name="Lapidus A."/>
            <person name="Glavina del Rio T."/>
            <person name="Dalin E."/>
            <person name="Tice H."/>
            <person name="Bruce D."/>
            <person name="Goodwin L."/>
            <person name="Pitluck S."/>
            <person name="Schmutz J."/>
            <person name="Larimer F."/>
            <person name="Land M."/>
            <person name="Hauser L."/>
            <person name="Kyrpides N."/>
            <person name="Ovchinnikova G."/>
            <person name="Zhao F."/>
            <person name="Li T."/>
            <person name="Liu Z."/>
            <person name="Overmann J."/>
            <person name="Bryant D.A."/>
            <person name="Richardson P."/>
        </authorList>
    </citation>
    <scope>NUCLEOTIDE SEQUENCE [LARGE SCALE GENOMIC DNA]</scope>
    <source>
        <strain>DSM 245 / NBRC 103803 / 6330</strain>
    </source>
</reference>
<sequence length="351" mass="39012">MLKNDLFLRALKRQPCSRTPIWVMRQAGRYLPEYRAVREKTDFLTLCKTPELAAEVTIQPVDLMGVDAAIIFSDILVINEAMGMNVEIIETKGIKLSPVIRSKADIDKLIVPDIDEKLGYVMDALRLTKKELDNRVPLIGFSGAAWTLFTYAVEGGGSKNYAFAKKMMYREPQMAHLLLGKISETISAYLLKQVEAGADAIQIFDSWASALSEDDYREFALPYIKQNVQAVKAKYPDIPVIVFSKDCNTILSDIADTGCDAMGLGWGIDIAKARAELKDRVALQGNLDPTVLYGTPEKIKSEAAKVLKQFGQHTESSGHVFNLGHGILPDVDPANLKLLVEFVKEESARYH</sequence>
<protein>
    <recommendedName>
        <fullName evidence="1">Uroporphyrinogen decarboxylase</fullName>
        <shortName evidence="1">UPD</shortName>
        <shortName evidence="1">URO-D</shortName>
        <ecNumber evidence="1">4.1.1.37</ecNumber>
    </recommendedName>
</protein>
<keyword id="KW-0963">Cytoplasm</keyword>
<keyword id="KW-0210">Decarboxylase</keyword>
<keyword id="KW-0456">Lyase</keyword>
<keyword id="KW-0627">Porphyrin biosynthesis</keyword>
<feature type="chain" id="PRO_1000099979" description="Uroporphyrinogen decarboxylase">
    <location>
        <begin position="1"/>
        <end position="351"/>
    </location>
</feature>
<feature type="binding site" evidence="1">
    <location>
        <begin position="25"/>
        <end position="29"/>
    </location>
    <ligand>
        <name>substrate</name>
    </ligand>
</feature>
<feature type="binding site" evidence="1">
    <location>
        <position position="74"/>
    </location>
    <ligand>
        <name>substrate</name>
    </ligand>
</feature>
<feature type="binding site" evidence="1">
    <location>
        <position position="151"/>
    </location>
    <ligand>
        <name>substrate</name>
    </ligand>
</feature>
<feature type="binding site" evidence="1">
    <location>
        <position position="206"/>
    </location>
    <ligand>
        <name>substrate</name>
    </ligand>
</feature>
<feature type="binding site" evidence="1">
    <location>
        <position position="325"/>
    </location>
    <ligand>
        <name>substrate</name>
    </ligand>
</feature>
<feature type="site" description="Transition state stabilizer" evidence="1">
    <location>
        <position position="74"/>
    </location>
</feature>
<comment type="function">
    <text evidence="1">Catalyzes the decarboxylation of four acetate groups of uroporphyrinogen-III to yield coproporphyrinogen-III.</text>
</comment>
<comment type="catalytic activity">
    <reaction evidence="1">
        <text>uroporphyrinogen III + 4 H(+) = coproporphyrinogen III + 4 CO2</text>
        <dbReference type="Rhea" id="RHEA:19865"/>
        <dbReference type="ChEBI" id="CHEBI:15378"/>
        <dbReference type="ChEBI" id="CHEBI:16526"/>
        <dbReference type="ChEBI" id="CHEBI:57308"/>
        <dbReference type="ChEBI" id="CHEBI:57309"/>
        <dbReference type="EC" id="4.1.1.37"/>
    </reaction>
</comment>
<comment type="pathway">
    <text evidence="1">Porphyrin-containing compound metabolism; protoporphyrin-IX biosynthesis; coproporphyrinogen-III from 5-aminolevulinate: step 4/4.</text>
</comment>
<comment type="subunit">
    <text evidence="1">Homodimer.</text>
</comment>
<comment type="subcellular location">
    <subcellularLocation>
        <location evidence="1">Cytoplasm</location>
    </subcellularLocation>
</comment>
<comment type="similarity">
    <text evidence="1">Belongs to the uroporphyrinogen decarboxylase family.</text>
</comment>
<dbReference type="EC" id="4.1.1.37" evidence="1"/>
<dbReference type="EMBL" id="CP001097">
    <property type="protein sequence ID" value="ACD91364.1"/>
    <property type="molecule type" value="Genomic_DNA"/>
</dbReference>
<dbReference type="RefSeq" id="WP_012467229.1">
    <property type="nucleotide sequence ID" value="NC_010803.1"/>
</dbReference>
<dbReference type="SMR" id="B3EHV5"/>
<dbReference type="STRING" id="290315.Clim_2341"/>
<dbReference type="KEGG" id="cli:Clim_2341"/>
<dbReference type="eggNOG" id="COG0407">
    <property type="taxonomic scope" value="Bacteria"/>
</dbReference>
<dbReference type="HOGENOM" id="CLU_040933_0_0_10"/>
<dbReference type="OrthoDB" id="9806656at2"/>
<dbReference type="UniPathway" id="UPA00251">
    <property type="reaction ID" value="UER00321"/>
</dbReference>
<dbReference type="Proteomes" id="UP000008841">
    <property type="component" value="Chromosome"/>
</dbReference>
<dbReference type="GO" id="GO:0005829">
    <property type="term" value="C:cytosol"/>
    <property type="evidence" value="ECO:0007669"/>
    <property type="project" value="TreeGrafter"/>
</dbReference>
<dbReference type="GO" id="GO:0004853">
    <property type="term" value="F:uroporphyrinogen decarboxylase activity"/>
    <property type="evidence" value="ECO:0007669"/>
    <property type="project" value="UniProtKB-UniRule"/>
</dbReference>
<dbReference type="GO" id="GO:0006782">
    <property type="term" value="P:protoporphyrinogen IX biosynthetic process"/>
    <property type="evidence" value="ECO:0007669"/>
    <property type="project" value="UniProtKB-UniRule"/>
</dbReference>
<dbReference type="CDD" id="cd00717">
    <property type="entry name" value="URO-D"/>
    <property type="match status" value="1"/>
</dbReference>
<dbReference type="FunFam" id="3.20.20.210:FF:000001">
    <property type="entry name" value="Uroporphyrinogen decarboxylase"/>
    <property type="match status" value="1"/>
</dbReference>
<dbReference type="Gene3D" id="3.20.20.210">
    <property type="match status" value="1"/>
</dbReference>
<dbReference type="HAMAP" id="MF_00218">
    <property type="entry name" value="URO_D"/>
    <property type="match status" value="1"/>
</dbReference>
<dbReference type="InterPro" id="IPR038071">
    <property type="entry name" value="UROD/MetE-like_sf"/>
</dbReference>
<dbReference type="InterPro" id="IPR006361">
    <property type="entry name" value="Uroporphyrinogen_deCO2ase_HemE"/>
</dbReference>
<dbReference type="InterPro" id="IPR000257">
    <property type="entry name" value="Uroporphyrinogen_deCOase"/>
</dbReference>
<dbReference type="NCBIfam" id="TIGR01464">
    <property type="entry name" value="hemE"/>
    <property type="match status" value="1"/>
</dbReference>
<dbReference type="PANTHER" id="PTHR21091">
    <property type="entry name" value="METHYLTETRAHYDROFOLATE:HOMOCYSTEINE METHYLTRANSFERASE RELATED"/>
    <property type="match status" value="1"/>
</dbReference>
<dbReference type="PANTHER" id="PTHR21091:SF169">
    <property type="entry name" value="UROPORPHYRINOGEN DECARBOXYLASE"/>
    <property type="match status" value="1"/>
</dbReference>
<dbReference type="Pfam" id="PF01208">
    <property type="entry name" value="URO-D"/>
    <property type="match status" value="1"/>
</dbReference>
<dbReference type="SUPFAM" id="SSF51726">
    <property type="entry name" value="UROD/MetE-like"/>
    <property type="match status" value="1"/>
</dbReference>
<dbReference type="PROSITE" id="PS00906">
    <property type="entry name" value="UROD_1"/>
    <property type="match status" value="1"/>
</dbReference>
<dbReference type="PROSITE" id="PS00907">
    <property type="entry name" value="UROD_2"/>
    <property type="match status" value="1"/>
</dbReference>
<organism>
    <name type="scientific">Chlorobium limicola (strain DSM 245 / NBRC 103803 / 6330)</name>
    <dbReference type="NCBI Taxonomy" id="290315"/>
    <lineage>
        <taxon>Bacteria</taxon>
        <taxon>Pseudomonadati</taxon>
        <taxon>Chlorobiota</taxon>
        <taxon>Chlorobiia</taxon>
        <taxon>Chlorobiales</taxon>
        <taxon>Chlorobiaceae</taxon>
        <taxon>Chlorobium/Pelodictyon group</taxon>
        <taxon>Chlorobium</taxon>
    </lineage>
</organism>
<accession>B3EHV5</accession>
<evidence type="ECO:0000255" key="1">
    <source>
        <dbReference type="HAMAP-Rule" id="MF_00218"/>
    </source>
</evidence>
<name>DCUP_CHLL2</name>
<gene>
    <name evidence="1" type="primary">hemE</name>
    <name type="ordered locus">Clim_2341</name>
</gene>